<evidence type="ECO:0000255" key="1">
    <source>
        <dbReference type="HAMAP-Rule" id="MF_01364"/>
    </source>
</evidence>
<evidence type="ECO:0000305" key="2"/>
<dbReference type="EMBL" id="CP000724">
    <property type="protein sequence ID" value="ABR50537.1"/>
    <property type="molecule type" value="Genomic_DNA"/>
</dbReference>
<dbReference type="RefSeq" id="WP_012065428.1">
    <property type="nucleotide sequence ID" value="NC_009633.1"/>
</dbReference>
<dbReference type="SMR" id="A6TWG9"/>
<dbReference type="STRING" id="293826.Amet_4465"/>
<dbReference type="KEGG" id="amt:Amet_4465"/>
<dbReference type="eggNOG" id="COG0199">
    <property type="taxonomic scope" value="Bacteria"/>
</dbReference>
<dbReference type="HOGENOM" id="CLU_139869_3_0_9"/>
<dbReference type="OrthoDB" id="9810484at2"/>
<dbReference type="Proteomes" id="UP000001572">
    <property type="component" value="Chromosome"/>
</dbReference>
<dbReference type="GO" id="GO:0005737">
    <property type="term" value="C:cytoplasm"/>
    <property type="evidence" value="ECO:0007669"/>
    <property type="project" value="UniProtKB-ARBA"/>
</dbReference>
<dbReference type="GO" id="GO:0015935">
    <property type="term" value="C:small ribosomal subunit"/>
    <property type="evidence" value="ECO:0007669"/>
    <property type="project" value="TreeGrafter"/>
</dbReference>
<dbReference type="GO" id="GO:0019843">
    <property type="term" value="F:rRNA binding"/>
    <property type="evidence" value="ECO:0007669"/>
    <property type="project" value="UniProtKB-UniRule"/>
</dbReference>
<dbReference type="GO" id="GO:0003735">
    <property type="term" value="F:structural constituent of ribosome"/>
    <property type="evidence" value="ECO:0007669"/>
    <property type="project" value="InterPro"/>
</dbReference>
<dbReference type="GO" id="GO:0008270">
    <property type="term" value="F:zinc ion binding"/>
    <property type="evidence" value="ECO:0007669"/>
    <property type="project" value="UniProtKB-UniRule"/>
</dbReference>
<dbReference type="GO" id="GO:0006412">
    <property type="term" value="P:translation"/>
    <property type="evidence" value="ECO:0007669"/>
    <property type="project" value="UniProtKB-UniRule"/>
</dbReference>
<dbReference type="FunFam" id="4.10.830.10:FF:000001">
    <property type="entry name" value="30S ribosomal protein S14 type Z"/>
    <property type="match status" value="1"/>
</dbReference>
<dbReference type="Gene3D" id="4.10.830.10">
    <property type="entry name" value="30s Ribosomal Protein S14, Chain N"/>
    <property type="match status" value="1"/>
</dbReference>
<dbReference type="HAMAP" id="MF_01364_B">
    <property type="entry name" value="Ribosomal_uS14_2_B"/>
    <property type="match status" value="1"/>
</dbReference>
<dbReference type="InterPro" id="IPR001209">
    <property type="entry name" value="Ribosomal_uS14"/>
</dbReference>
<dbReference type="InterPro" id="IPR023053">
    <property type="entry name" value="Ribosomal_uS14_bact"/>
</dbReference>
<dbReference type="InterPro" id="IPR018271">
    <property type="entry name" value="Ribosomal_uS14_CS"/>
</dbReference>
<dbReference type="InterPro" id="IPR043140">
    <property type="entry name" value="Ribosomal_uS14_sf"/>
</dbReference>
<dbReference type="NCBIfam" id="NF005974">
    <property type="entry name" value="PRK08061.1"/>
    <property type="match status" value="1"/>
</dbReference>
<dbReference type="PANTHER" id="PTHR19836">
    <property type="entry name" value="30S RIBOSOMAL PROTEIN S14"/>
    <property type="match status" value="1"/>
</dbReference>
<dbReference type="PANTHER" id="PTHR19836:SF19">
    <property type="entry name" value="SMALL RIBOSOMAL SUBUNIT PROTEIN US14M"/>
    <property type="match status" value="1"/>
</dbReference>
<dbReference type="Pfam" id="PF00253">
    <property type="entry name" value="Ribosomal_S14"/>
    <property type="match status" value="1"/>
</dbReference>
<dbReference type="SUPFAM" id="SSF57716">
    <property type="entry name" value="Glucocorticoid receptor-like (DNA-binding domain)"/>
    <property type="match status" value="1"/>
</dbReference>
<dbReference type="PROSITE" id="PS00527">
    <property type="entry name" value="RIBOSOMAL_S14"/>
    <property type="match status" value="1"/>
</dbReference>
<keyword id="KW-0479">Metal-binding</keyword>
<keyword id="KW-1185">Reference proteome</keyword>
<keyword id="KW-0687">Ribonucleoprotein</keyword>
<keyword id="KW-0689">Ribosomal protein</keyword>
<keyword id="KW-0694">RNA-binding</keyword>
<keyword id="KW-0699">rRNA-binding</keyword>
<keyword id="KW-0862">Zinc</keyword>
<name>RS14Z_ALKMQ</name>
<organism>
    <name type="scientific">Alkaliphilus metalliredigens (strain QYMF)</name>
    <dbReference type="NCBI Taxonomy" id="293826"/>
    <lineage>
        <taxon>Bacteria</taxon>
        <taxon>Bacillati</taxon>
        <taxon>Bacillota</taxon>
        <taxon>Clostridia</taxon>
        <taxon>Peptostreptococcales</taxon>
        <taxon>Natronincolaceae</taxon>
        <taxon>Alkaliphilus</taxon>
    </lineage>
</organism>
<reference key="1">
    <citation type="journal article" date="2016" name="Genome Announc.">
        <title>Complete genome sequence of Alkaliphilus metalliredigens strain QYMF, an alkaliphilic and metal-reducing bacterium isolated from borax-contaminated leachate ponds.</title>
        <authorList>
            <person name="Hwang C."/>
            <person name="Copeland A."/>
            <person name="Lucas S."/>
            <person name="Lapidus A."/>
            <person name="Barry K."/>
            <person name="Detter J.C."/>
            <person name="Glavina Del Rio T."/>
            <person name="Hammon N."/>
            <person name="Israni S."/>
            <person name="Dalin E."/>
            <person name="Tice H."/>
            <person name="Pitluck S."/>
            <person name="Chertkov O."/>
            <person name="Brettin T."/>
            <person name="Bruce D."/>
            <person name="Han C."/>
            <person name="Schmutz J."/>
            <person name="Larimer F."/>
            <person name="Land M.L."/>
            <person name="Hauser L."/>
            <person name="Kyrpides N."/>
            <person name="Mikhailova N."/>
            <person name="Ye Q."/>
            <person name="Zhou J."/>
            <person name="Richardson P."/>
            <person name="Fields M.W."/>
        </authorList>
    </citation>
    <scope>NUCLEOTIDE SEQUENCE [LARGE SCALE GENOMIC DNA]</scope>
    <source>
        <strain>QYMF</strain>
    </source>
</reference>
<comment type="function">
    <text evidence="1">Binds 16S rRNA, required for the assembly of 30S particles and may also be responsible for determining the conformation of the 16S rRNA at the A site.</text>
</comment>
<comment type="cofactor">
    <cofactor evidence="1">
        <name>Zn(2+)</name>
        <dbReference type="ChEBI" id="CHEBI:29105"/>
    </cofactor>
    <text evidence="1">Binds 1 zinc ion per subunit.</text>
</comment>
<comment type="subunit">
    <text evidence="1">Part of the 30S ribosomal subunit. Contacts proteins S3 and S10.</text>
</comment>
<comment type="similarity">
    <text evidence="1">Belongs to the universal ribosomal protein uS14 family. Zinc-binding uS14 subfamily.</text>
</comment>
<accession>A6TWG9</accession>
<sequence length="61" mass="7197">MAKKSLKIKQARTQKYSTREYSRCKICGRPHAYLRKFGVCRICFRELAYKGQIPGVRKASW</sequence>
<proteinExistence type="inferred from homology"/>
<feature type="chain" id="PRO_1000067920" description="Small ribosomal subunit protein uS14">
    <location>
        <begin position="1"/>
        <end position="61"/>
    </location>
</feature>
<feature type="binding site" evidence="1">
    <location>
        <position position="24"/>
    </location>
    <ligand>
        <name>Zn(2+)</name>
        <dbReference type="ChEBI" id="CHEBI:29105"/>
    </ligand>
</feature>
<feature type="binding site" evidence="1">
    <location>
        <position position="27"/>
    </location>
    <ligand>
        <name>Zn(2+)</name>
        <dbReference type="ChEBI" id="CHEBI:29105"/>
    </ligand>
</feature>
<feature type="binding site" evidence="1">
    <location>
        <position position="40"/>
    </location>
    <ligand>
        <name>Zn(2+)</name>
        <dbReference type="ChEBI" id="CHEBI:29105"/>
    </ligand>
</feature>
<feature type="binding site" evidence="1">
    <location>
        <position position="43"/>
    </location>
    <ligand>
        <name>Zn(2+)</name>
        <dbReference type="ChEBI" id="CHEBI:29105"/>
    </ligand>
</feature>
<protein>
    <recommendedName>
        <fullName evidence="1">Small ribosomal subunit protein uS14</fullName>
    </recommendedName>
    <alternativeName>
        <fullName evidence="2">30S ribosomal protein S14 type Z</fullName>
    </alternativeName>
</protein>
<gene>
    <name evidence="1" type="primary">rpsZ</name>
    <name evidence="1" type="synonym">rpsN</name>
    <name type="ordered locus">Amet_4465</name>
</gene>